<protein>
    <recommendedName>
        <fullName evidence="1">Nucleoid-associated protein Sca_0120</fullName>
    </recommendedName>
</protein>
<evidence type="ECO:0000255" key="1">
    <source>
        <dbReference type="HAMAP-Rule" id="MF_00274"/>
    </source>
</evidence>
<evidence type="ECO:0000256" key="2">
    <source>
        <dbReference type="SAM" id="MobiDB-lite"/>
    </source>
</evidence>
<gene>
    <name type="ordered locus">Sca_0120</name>
</gene>
<proteinExistence type="inferred from homology"/>
<sequence>MRGGGNMQQMMKQMQKMQKKMAEEQEKLKDEKVEGSAGGGMVKVVVTGHKEVVDVVIDEEAVDPDDVEMLQDLVLAATNEAMNKADELTSERLGKHTKGLNIPGM</sequence>
<name>Y120_STACT</name>
<reference key="1">
    <citation type="journal article" date="2009" name="Appl. Environ. Microbiol.">
        <title>Genome analysis of the meat starter culture bacterium Staphylococcus carnosus TM300.</title>
        <authorList>
            <person name="Rosenstein R."/>
            <person name="Nerz C."/>
            <person name="Biswas L."/>
            <person name="Resch A."/>
            <person name="Raddatz G."/>
            <person name="Schuster S.C."/>
            <person name="Goetz F."/>
        </authorList>
    </citation>
    <scope>NUCLEOTIDE SEQUENCE [LARGE SCALE GENOMIC DNA]</scope>
    <source>
        <strain>TM300</strain>
    </source>
</reference>
<accession>B9DLF6</accession>
<keyword id="KW-0963">Cytoplasm</keyword>
<keyword id="KW-0238">DNA-binding</keyword>
<keyword id="KW-1185">Reference proteome</keyword>
<comment type="function">
    <text evidence="1">Binds to DNA and alters its conformation. May be involved in regulation of gene expression, nucleoid organization and DNA protection.</text>
</comment>
<comment type="subunit">
    <text evidence="1">Homodimer.</text>
</comment>
<comment type="subcellular location">
    <subcellularLocation>
        <location evidence="1">Cytoplasm</location>
        <location evidence="1">Nucleoid</location>
    </subcellularLocation>
</comment>
<comment type="similarity">
    <text evidence="1">Belongs to the YbaB/EbfC family.</text>
</comment>
<organism>
    <name type="scientific">Staphylococcus carnosus (strain TM300)</name>
    <dbReference type="NCBI Taxonomy" id="396513"/>
    <lineage>
        <taxon>Bacteria</taxon>
        <taxon>Bacillati</taxon>
        <taxon>Bacillota</taxon>
        <taxon>Bacilli</taxon>
        <taxon>Bacillales</taxon>
        <taxon>Staphylococcaceae</taxon>
        <taxon>Staphylococcus</taxon>
    </lineage>
</organism>
<dbReference type="EMBL" id="AM295250">
    <property type="protein sequence ID" value="CAL27033.1"/>
    <property type="molecule type" value="Genomic_DNA"/>
</dbReference>
<dbReference type="RefSeq" id="WP_012664148.1">
    <property type="nucleotide sequence ID" value="NC_012121.1"/>
</dbReference>
<dbReference type="SMR" id="B9DLF6"/>
<dbReference type="KEGG" id="sca:SCA_0120"/>
<dbReference type="eggNOG" id="COG0718">
    <property type="taxonomic scope" value="Bacteria"/>
</dbReference>
<dbReference type="HOGENOM" id="CLU_140930_1_0_9"/>
<dbReference type="OrthoDB" id="9795263at2"/>
<dbReference type="BioCyc" id="SCAR396513:SCA_RS00570-MONOMER"/>
<dbReference type="Proteomes" id="UP000000444">
    <property type="component" value="Chromosome"/>
</dbReference>
<dbReference type="GO" id="GO:0043590">
    <property type="term" value="C:bacterial nucleoid"/>
    <property type="evidence" value="ECO:0007669"/>
    <property type="project" value="UniProtKB-UniRule"/>
</dbReference>
<dbReference type="GO" id="GO:0005829">
    <property type="term" value="C:cytosol"/>
    <property type="evidence" value="ECO:0007669"/>
    <property type="project" value="TreeGrafter"/>
</dbReference>
<dbReference type="GO" id="GO:0003677">
    <property type="term" value="F:DNA binding"/>
    <property type="evidence" value="ECO:0007669"/>
    <property type="project" value="UniProtKB-UniRule"/>
</dbReference>
<dbReference type="FunFam" id="3.30.1310.10:FF:000002">
    <property type="entry name" value="Nucleoid-associated protein IKC_06587"/>
    <property type="match status" value="1"/>
</dbReference>
<dbReference type="Gene3D" id="3.30.1310.10">
    <property type="entry name" value="Nucleoid-associated protein YbaB-like domain"/>
    <property type="match status" value="1"/>
</dbReference>
<dbReference type="HAMAP" id="MF_00274">
    <property type="entry name" value="DNA_YbaB_EbfC"/>
    <property type="match status" value="1"/>
</dbReference>
<dbReference type="InterPro" id="IPR036894">
    <property type="entry name" value="YbaB-like_sf"/>
</dbReference>
<dbReference type="InterPro" id="IPR004401">
    <property type="entry name" value="YbaB/EbfC"/>
</dbReference>
<dbReference type="NCBIfam" id="TIGR00103">
    <property type="entry name" value="DNA_YbaB_EbfC"/>
    <property type="match status" value="1"/>
</dbReference>
<dbReference type="PANTHER" id="PTHR33449">
    <property type="entry name" value="NUCLEOID-ASSOCIATED PROTEIN YBAB"/>
    <property type="match status" value="1"/>
</dbReference>
<dbReference type="PANTHER" id="PTHR33449:SF1">
    <property type="entry name" value="NUCLEOID-ASSOCIATED PROTEIN YBAB"/>
    <property type="match status" value="1"/>
</dbReference>
<dbReference type="Pfam" id="PF02575">
    <property type="entry name" value="YbaB_DNA_bd"/>
    <property type="match status" value="1"/>
</dbReference>
<dbReference type="PIRSF" id="PIRSF004555">
    <property type="entry name" value="UCP004555"/>
    <property type="match status" value="1"/>
</dbReference>
<dbReference type="SUPFAM" id="SSF82607">
    <property type="entry name" value="YbaB-like"/>
    <property type="match status" value="1"/>
</dbReference>
<feature type="chain" id="PRO_1000197676" description="Nucleoid-associated protein Sca_0120">
    <location>
        <begin position="1"/>
        <end position="105"/>
    </location>
</feature>
<feature type="region of interest" description="Disordered" evidence="2">
    <location>
        <begin position="1"/>
        <end position="36"/>
    </location>
</feature>
<feature type="compositionally biased region" description="Low complexity" evidence="2">
    <location>
        <begin position="7"/>
        <end position="16"/>
    </location>
</feature>
<feature type="compositionally biased region" description="Basic and acidic residues" evidence="2">
    <location>
        <begin position="20"/>
        <end position="34"/>
    </location>
</feature>